<reference key="1">
    <citation type="journal article" date="2001" name="Lancet">
        <title>Whole genome sequencing of meticillin-resistant Staphylococcus aureus.</title>
        <authorList>
            <person name="Kuroda M."/>
            <person name="Ohta T."/>
            <person name="Uchiyama I."/>
            <person name="Baba T."/>
            <person name="Yuzawa H."/>
            <person name="Kobayashi I."/>
            <person name="Cui L."/>
            <person name="Oguchi A."/>
            <person name="Aoki K."/>
            <person name="Nagai Y."/>
            <person name="Lian J.-Q."/>
            <person name="Ito T."/>
            <person name="Kanamori M."/>
            <person name="Matsumaru H."/>
            <person name="Maruyama A."/>
            <person name="Murakami H."/>
            <person name="Hosoyama A."/>
            <person name="Mizutani-Ui Y."/>
            <person name="Takahashi N.K."/>
            <person name="Sawano T."/>
            <person name="Inoue R."/>
            <person name="Kaito C."/>
            <person name="Sekimizu K."/>
            <person name="Hirakawa H."/>
            <person name="Kuhara S."/>
            <person name="Goto S."/>
            <person name="Yabuzaki J."/>
            <person name="Kanehisa M."/>
            <person name="Yamashita A."/>
            <person name="Oshima K."/>
            <person name="Furuya K."/>
            <person name="Yoshino C."/>
            <person name="Shiba T."/>
            <person name="Hattori M."/>
            <person name="Ogasawara N."/>
            <person name="Hayashi H."/>
            <person name="Hiramatsu K."/>
        </authorList>
    </citation>
    <scope>NUCLEOTIDE SEQUENCE [LARGE SCALE GENOMIC DNA]</scope>
    <source>
        <strain>Mu50 / ATCC 700699</strain>
    </source>
</reference>
<keyword id="KW-0067">ATP-binding</keyword>
<keyword id="KW-0963">Cytoplasm</keyword>
<keyword id="KW-0418">Kinase</keyword>
<keyword id="KW-0520">NAD</keyword>
<keyword id="KW-0521">NADP</keyword>
<keyword id="KW-0547">Nucleotide-binding</keyword>
<keyword id="KW-0808">Transferase</keyword>
<proteinExistence type="inferred from homology"/>
<name>NADK_STAAM</name>
<accession>P65776</accession>
<accession>Q99V84</accession>
<dbReference type="EC" id="2.7.1.23" evidence="1"/>
<dbReference type="EMBL" id="BA000017">
    <property type="protein sequence ID" value="BAB57169.1"/>
    <property type="molecule type" value="Genomic_DNA"/>
</dbReference>
<dbReference type="RefSeq" id="WP_001270834.1">
    <property type="nucleotide sequence ID" value="NC_002758.2"/>
</dbReference>
<dbReference type="SMR" id="P65776"/>
<dbReference type="KEGG" id="sav:SAV1007"/>
<dbReference type="HOGENOM" id="CLU_008831_0_3_9"/>
<dbReference type="PhylomeDB" id="P65776"/>
<dbReference type="Proteomes" id="UP000002481">
    <property type="component" value="Chromosome"/>
</dbReference>
<dbReference type="GO" id="GO:0005737">
    <property type="term" value="C:cytoplasm"/>
    <property type="evidence" value="ECO:0007669"/>
    <property type="project" value="UniProtKB-SubCell"/>
</dbReference>
<dbReference type="GO" id="GO:0005524">
    <property type="term" value="F:ATP binding"/>
    <property type="evidence" value="ECO:0007669"/>
    <property type="project" value="UniProtKB-KW"/>
</dbReference>
<dbReference type="GO" id="GO:0046872">
    <property type="term" value="F:metal ion binding"/>
    <property type="evidence" value="ECO:0007669"/>
    <property type="project" value="UniProtKB-UniRule"/>
</dbReference>
<dbReference type="GO" id="GO:0051287">
    <property type="term" value="F:NAD binding"/>
    <property type="evidence" value="ECO:0007669"/>
    <property type="project" value="UniProtKB-ARBA"/>
</dbReference>
<dbReference type="GO" id="GO:0003951">
    <property type="term" value="F:NAD+ kinase activity"/>
    <property type="evidence" value="ECO:0007669"/>
    <property type="project" value="UniProtKB-UniRule"/>
</dbReference>
<dbReference type="GO" id="GO:0019674">
    <property type="term" value="P:NAD metabolic process"/>
    <property type="evidence" value="ECO:0007669"/>
    <property type="project" value="InterPro"/>
</dbReference>
<dbReference type="GO" id="GO:0006741">
    <property type="term" value="P:NADP biosynthetic process"/>
    <property type="evidence" value="ECO:0007669"/>
    <property type="project" value="UniProtKB-UniRule"/>
</dbReference>
<dbReference type="FunFam" id="2.60.200.30:FF:000002">
    <property type="entry name" value="NAD kinase"/>
    <property type="match status" value="1"/>
</dbReference>
<dbReference type="Gene3D" id="3.40.50.10330">
    <property type="entry name" value="Probable inorganic polyphosphate/atp-NAD kinase, domain 1"/>
    <property type="match status" value="1"/>
</dbReference>
<dbReference type="Gene3D" id="2.60.200.30">
    <property type="entry name" value="Probable inorganic polyphosphate/atp-NAD kinase, domain 2"/>
    <property type="match status" value="1"/>
</dbReference>
<dbReference type="HAMAP" id="MF_00361">
    <property type="entry name" value="NAD_kinase"/>
    <property type="match status" value="1"/>
</dbReference>
<dbReference type="InterPro" id="IPR017438">
    <property type="entry name" value="ATP-NAD_kinase_N"/>
</dbReference>
<dbReference type="InterPro" id="IPR017437">
    <property type="entry name" value="ATP-NAD_kinase_PpnK-typ_C"/>
</dbReference>
<dbReference type="InterPro" id="IPR016064">
    <property type="entry name" value="NAD/diacylglycerol_kinase_sf"/>
</dbReference>
<dbReference type="InterPro" id="IPR002504">
    <property type="entry name" value="NADK"/>
</dbReference>
<dbReference type="NCBIfam" id="NF003424">
    <property type="entry name" value="PRK04885.1"/>
    <property type="match status" value="1"/>
</dbReference>
<dbReference type="PANTHER" id="PTHR20275">
    <property type="entry name" value="NAD KINASE"/>
    <property type="match status" value="1"/>
</dbReference>
<dbReference type="PANTHER" id="PTHR20275:SF0">
    <property type="entry name" value="NAD KINASE"/>
    <property type="match status" value="1"/>
</dbReference>
<dbReference type="Pfam" id="PF01513">
    <property type="entry name" value="NAD_kinase"/>
    <property type="match status" value="1"/>
</dbReference>
<dbReference type="Pfam" id="PF20143">
    <property type="entry name" value="NAD_kinase_C"/>
    <property type="match status" value="1"/>
</dbReference>
<dbReference type="SUPFAM" id="SSF111331">
    <property type="entry name" value="NAD kinase/diacylglycerol kinase-like"/>
    <property type="match status" value="1"/>
</dbReference>
<sequence length="269" mass="30769">MRYTILTKGDSKSNALKHKMMNYMKDFRMIEDSENPEIVISVGGDGTLLQAFHQYSHMLSKVAFVGVHTGHLGFYADWLPHEVEKLIIEINNSEFQVIEYPLLEIIMRYNDNGYETRYLALNEATMKTENGSTLVVDVNLRGKHFERFRGDGLCVSTPSGSTAYNKALGGALIHPSLEAMQITEIASINNRVFRTVGSPLVLPKHHTCLISPVNHDTIRMTIDHVSIKHKNVNSIQYRVANEKVRFARFRPFPFWKRVHDSFISSDEER</sequence>
<protein>
    <recommendedName>
        <fullName evidence="1">NAD kinase</fullName>
        <ecNumber evidence="1">2.7.1.23</ecNumber>
    </recommendedName>
    <alternativeName>
        <fullName evidence="1">ATP-dependent NAD kinase</fullName>
    </alternativeName>
</protein>
<gene>
    <name evidence="1" type="primary">nadK</name>
    <name type="ordered locus">SAV1007</name>
</gene>
<comment type="function">
    <text evidence="1">Involved in the regulation of the intracellular balance of NAD and NADP, and is a key enzyme in the biosynthesis of NADP. Catalyzes specifically the phosphorylation on 2'-hydroxyl of the adenosine moiety of NAD to yield NADP.</text>
</comment>
<comment type="catalytic activity">
    <reaction evidence="1">
        <text>NAD(+) + ATP = ADP + NADP(+) + H(+)</text>
        <dbReference type="Rhea" id="RHEA:18629"/>
        <dbReference type="ChEBI" id="CHEBI:15378"/>
        <dbReference type="ChEBI" id="CHEBI:30616"/>
        <dbReference type="ChEBI" id="CHEBI:57540"/>
        <dbReference type="ChEBI" id="CHEBI:58349"/>
        <dbReference type="ChEBI" id="CHEBI:456216"/>
        <dbReference type="EC" id="2.7.1.23"/>
    </reaction>
</comment>
<comment type="cofactor">
    <cofactor evidence="1">
        <name>a divalent metal cation</name>
        <dbReference type="ChEBI" id="CHEBI:60240"/>
    </cofactor>
</comment>
<comment type="subcellular location">
    <subcellularLocation>
        <location evidence="1">Cytoplasm</location>
    </subcellularLocation>
</comment>
<comment type="similarity">
    <text evidence="1">Belongs to the NAD kinase family.</text>
</comment>
<evidence type="ECO:0000255" key="1">
    <source>
        <dbReference type="HAMAP-Rule" id="MF_00361"/>
    </source>
</evidence>
<feature type="chain" id="PRO_0000120659" description="NAD kinase">
    <location>
        <begin position="1"/>
        <end position="269"/>
    </location>
</feature>
<feature type="active site" description="Proton acceptor" evidence="1">
    <location>
        <position position="45"/>
    </location>
</feature>
<feature type="binding site" evidence="1">
    <location>
        <begin position="45"/>
        <end position="46"/>
    </location>
    <ligand>
        <name>NAD(+)</name>
        <dbReference type="ChEBI" id="CHEBI:57540"/>
    </ligand>
</feature>
<feature type="binding site" evidence="1">
    <location>
        <begin position="122"/>
        <end position="123"/>
    </location>
    <ligand>
        <name>NAD(+)</name>
        <dbReference type="ChEBI" id="CHEBI:57540"/>
    </ligand>
</feature>
<feature type="binding site" evidence="1">
    <location>
        <position position="149"/>
    </location>
    <ligand>
        <name>NAD(+)</name>
        <dbReference type="ChEBI" id="CHEBI:57540"/>
    </ligand>
</feature>
<feature type="binding site" evidence="1">
    <location>
        <position position="151"/>
    </location>
    <ligand>
        <name>NAD(+)</name>
        <dbReference type="ChEBI" id="CHEBI:57540"/>
    </ligand>
</feature>
<feature type="binding site" evidence="1">
    <location>
        <position position="186"/>
    </location>
    <ligand>
        <name>NAD(+)</name>
        <dbReference type="ChEBI" id="CHEBI:57540"/>
    </ligand>
</feature>
<organism>
    <name type="scientific">Staphylococcus aureus (strain Mu50 / ATCC 700699)</name>
    <dbReference type="NCBI Taxonomy" id="158878"/>
    <lineage>
        <taxon>Bacteria</taxon>
        <taxon>Bacillati</taxon>
        <taxon>Bacillota</taxon>
        <taxon>Bacilli</taxon>
        <taxon>Bacillales</taxon>
        <taxon>Staphylococcaceae</taxon>
        <taxon>Staphylococcus</taxon>
    </lineage>
</organism>